<name>RL30_SHELP</name>
<feature type="chain" id="PRO_1000056107" description="Large ribosomal subunit protein uL30">
    <location>
        <begin position="1"/>
        <end position="60"/>
    </location>
</feature>
<proteinExistence type="inferred from homology"/>
<organism>
    <name type="scientific">Shewanella loihica (strain ATCC BAA-1088 / PV-4)</name>
    <dbReference type="NCBI Taxonomy" id="323850"/>
    <lineage>
        <taxon>Bacteria</taxon>
        <taxon>Pseudomonadati</taxon>
        <taxon>Pseudomonadota</taxon>
        <taxon>Gammaproteobacteria</taxon>
        <taxon>Alteromonadales</taxon>
        <taxon>Shewanellaceae</taxon>
        <taxon>Shewanella</taxon>
    </lineage>
</organism>
<comment type="subunit">
    <text evidence="1">Part of the 50S ribosomal subunit.</text>
</comment>
<comment type="similarity">
    <text evidence="1">Belongs to the universal ribosomal protein uL30 family.</text>
</comment>
<accession>A3Q9A0</accession>
<dbReference type="EMBL" id="CP000606">
    <property type="protein sequence ID" value="ABO22048.1"/>
    <property type="molecule type" value="Genomic_DNA"/>
</dbReference>
<dbReference type="RefSeq" id="WP_011863984.1">
    <property type="nucleotide sequence ID" value="NC_009092.1"/>
</dbReference>
<dbReference type="SMR" id="A3Q9A0"/>
<dbReference type="STRING" id="323850.Shew_0176"/>
<dbReference type="KEGG" id="slo:Shew_0176"/>
<dbReference type="eggNOG" id="COG1841">
    <property type="taxonomic scope" value="Bacteria"/>
</dbReference>
<dbReference type="HOGENOM" id="CLU_131047_1_4_6"/>
<dbReference type="OrthoDB" id="9812790at2"/>
<dbReference type="Proteomes" id="UP000001558">
    <property type="component" value="Chromosome"/>
</dbReference>
<dbReference type="GO" id="GO:0022625">
    <property type="term" value="C:cytosolic large ribosomal subunit"/>
    <property type="evidence" value="ECO:0007669"/>
    <property type="project" value="TreeGrafter"/>
</dbReference>
<dbReference type="GO" id="GO:0003735">
    <property type="term" value="F:structural constituent of ribosome"/>
    <property type="evidence" value="ECO:0007669"/>
    <property type="project" value="InterPro"/>
</dbReference>
<dbReference type="GO" id="GO:0006412">
    <property type="term" value="P:translation"/>
    <property type="evidence" value="ECO:0007669"/>
    <property type="project" value="UniProtKB-UniRule"/>
</dbReference>
<dbReference type="CDD" id="cd01658">
    <property type="entry name" value="Ribosomal_L30"/>
    <property type="match status" value="1"/>
</dbReference>
<dbReference type="FunFam" id="3.30.1390.20:FF:000001">
    <property type="entry name" value="50S ribosomal protein L30"/>
    <property type="match status" value="1"/>
</dbReference>
<dbReference type="Gene3D" id="3.30.1390.20">
    <property type="entry name" value="Ribosomal protein L30, ferredoxin-like fold domain"/>
    <property type="match status" value="1"/>
</dbReference>
<dbReference type="HAMAP" id="MF_01371_B">
    <property type="entry name" value="Ribosomal_uL30_B"/>
    <property type="match status" value="1"/>
</dbReference>
<dbReference type="InterPro" id="IPR036919">
    <property type="entry name" value="Ribo_uL30_ferredoxin-like_sf"/>
</dbReference>
<dbReference type="InterPro" id="IPR005996">
    <property type="entry name" value="Ribosomal_uL30_bac-type"/>
</dbReference>
<dbReference type="InterPro" id="IPR018038">
    <property type="entry name" value="Ribosomal_uL30_CS"/>
</dbReference>
<dbReference type="InterPro" id="IPR016082">
    <property type="entry name" value="Ribosomal_uL30_ferredoxin-like"/>
</dbReference>
<dbReference type="NCBIfam" id="TIGR01308">
    <property type="entry name" value="rpmD_bact"/>
    <property type="match status" value="1"/>
</dbReference>
<dbReference type="PANTHER" id="PTHR15892:SF2">
    <property type="entry name" value="LARGE RIBOSOMAL SUBUNIT PROTEIN UL30M"/>
    <property type="match status" value="1"/>
</dbReference>
<dbReference type="PANTHER" id="PTHR15892">
    <property type="entry name" value="MITOCHONDRIAL RIBOSOMAL PROTEIN L30"/>
    <property type="match status" value="1"/>
</dbReference>
<dbReference type="Pfam" id="PF00327">
    <property type="entry name" value="Ribosomal_L30"/>
    <property type="match status" value="1"/>
</dbReference>
<dbReference type="PIRSF" id="PIRSF002211">
    <property type="entry name" value="Ribosomal_L30_bac-type"/>
    <property type="match status" value="1"/>
</dbReference>
<dbReference type="SUPFAM" id="SSF55129">
    <property type="entry name" value="Ribosomal protein L30p/L7e"/>
    <property type="match status" value="1"/>
</dbReference>
<dbReference type="PROSITE" id="PS00634">
    <property type="entry name" value="RIBOSOMAL_L30"/>
    <property type="match status" value="1"/>
</dbReference>
<reference key="1">
    <citation type="submission" date="2007-03" db="EMBL/GenBank/DDBJ databases">
        <title>Complete sequence of Shewanella loihica PV-4.</title>
        <authorList>
            <consortium name="US DOE Joint Genome Institute"/>
            <person name="Copeland A."/>
            <person name="Lucas S."/>
            <person name="Lapidus A."/>
            <person name="Barry K."/>
            <person name="Detter J.C."/>
            <person name="Glavina del Rio T."/>
            <person name="Hammon N."/>
            <person name="Israni S."/>
            <person name="Dalin E."/>
            <person name="Tice H."/>
            <person name="Pitluck S."/>
            <person name="Chain P."/>
            <person name="Malfatti S."/>
            <person name="Shin M."/>
            <person name="Vergez L."/>
            <person name="Schmutz J."/>
            <person name="Larimer F."/>
            <person name="Land M."/>
            <person name="Hauser L."/>
            <person name="Kyrpides N."/>
            <person name="Mikhailova N."/>
            <person name="Romine M.F."/>
            <person name="Serres G."/>
            <person name="Fredrickson J."/>
            <person name="Tiedje J."/>
            <person name="Richardson P."/>
        </authorList>
    </citation>
    <scope>NUCLEOTIDE SEQUENCE [LARGE SCALE GENOMIC DNA]</scope>
    <source>
        <strain>ATCC BAA-1088 / PV-4</strain>
    </source>
</reference>
<keyword id="KW-1185">Reference proteome</keyword>
<keyword id="KW-0687">Ribonucleoprotein</keyword>
<keyword id="KW-0689">Ribosomal protein</keyword>
<evidence type="ECO:0000255" key="1">
    <source>
        <dbReference type="HAMAP-Rule" id="MF_01371"/>
    </source>
</evidence>
<evidence type="ECO:0000305" key="2"/>
<protein>
    <recommendedName>
        <fullName evidence="1">Large ribosomal subunit protein uL30</fullName>
    </recommendedName>
    <alternativeName>
        <fullName evidence="2">50S ribosomal protein L30</fullName>
    </alternativeName>
</protein>
<gene>
    <name evidence="1" type="primary">rpmD</name>
    <name type="ordered locus">Shew_0176</name>
</gene>
<sequence length="60" mass="6768">MATKTLKVTQTKSSIGRLPKHRATLTGLGLRRINHTVELEDTPAVRGMINKVYYMVKVED</sequence>